<dbReference type="EMBL" id="U36840">
    <property type="protein sequence ID" value="AAA79801.1"/>
    <property type="status" value="ALT_INIT"/>
    <property type="molecule type" value="Genomic_DNA"/>
</dbReference>
<dbReference type="EMBL" id="U00096">
    <property type="protein sequence ID" value="AAT48146.1"/>
    <property type="molecule type" value="Genomic_DNA"/>
</dbReference>
<dbReference type="EMBL" id="AP009048">
    <property type="protein sequence ID" value="BAE76767.1"/>
    <property type="molecule type" value="Genomic_DNA"/>
</dbReference>
<dbReference type="RefSeq" id="WP_000787597.1">
    <property type="nucleotide sequence ID" value="NZ_LN832404.1"/>
</dbReference>
<dbReference type="RefSeq" id="YP_026173.1">
    <property type="nucleotide sequence ID" value="NC_000913.3"/>
</dbReference>
<dbReference type="BioGRID" id="4260625">
    <property type="interactions" value="30"/>
</dbReference>
<dbReference type="FunCoup" id="P52131">
    <property type="interactions" value="3"/>
</dbReference>
<dbReference type="STRING" id="511145.b2632"/>
<dbReference type="PaxDb" id="511145-b2632"/>
<dbReference type="EnsemblBacteria" id="AAT48146">
    <property type="protein sequence ID" value="AAT48146"/>
    <property type="gene ID" value="b2632"/>
</dbReference>
<dbReference type="GeneID" id="947124"/>
<dbReference type="KEGG" id="ecj:JW5419"/>
<dbReference type="KEGG" id="eco:b2632"/>
<dbReference type="KEGG" id="ecoc:C3026_14560"/>
<dbReference type="PATRIC" id="fig|1411691.4.peg.4107"/>
<dbReference type="EchoBASE" id="EB2994"/>
<dbReference type="eggNOG" id="COG3596">
    <property type="taxonomic scope" value="Bacteria"/>
</dbReference>
<dbReference type="HOGENOM" id="CLU_059925_0_0_6"/>
<dbReference type="InParanoid" id="P52131"/>
<dbReference type="OMA" id="WHWASAQ"/>
<dbReference type="OrthoDB" id="9779790at2"/>
<dbReference type="PhylomeDB" id="P52131"/>
<dbReference type="BioCyc" id="EcoCyc:G7367-MONOMER"/>
<dbReference type="PRO" id="PR:P52131"/>
<dbReference type="Proteomes" id="UP000000625">
    <property type="component" value="Chromosome"/>
</dbReference>
<dbReference type="GO" id="GO:0005737">
    <property type="term" value="C:cytoplasm"/>
    <property type="evidence" value="ECO:0000318"/>
    <property type="project" value="GO_Central"/>
</dbReference>
<dbReference type="GO" id="GO:0005829">
    <property type="term" value="C:cytosol"/>
    <property type="evidence" value="ECO:0000314"/>
    <property type="project" value="EcoCyc"/>
</dbReference>
<dbReference type="GO" id="GO:0005525">
    <property type="term" value="F:GTP binding"/>
    <property type="evidence" value="ECO:0007669"/>
    <property type="project" value="UniProtKB-KW"/>
</dbReference>
<dbReference type="GO" id="GO:0030488">
    <property type="term" value="P:tRNA methylation"/>
    <property type="evidence" value="ECO:0000318"/>
    <property type="project" value="GO_Central"/>
</dbReference>
<dbReference type="GO" id="GO:0002098">
    <property type="term" value="P:tRNA wobble uridine modification"/>
    <property type="evidence" value="ECO:0000318"/>
    <property type="project" value="GO_Central"/>
</dbReference>
<dbReference type="CDD" id="cd11383">
    <property type="entry name" value="YfjP"/>
    <property type="match status" value="1"/>
</dbReference>
<dbReference type="FunFam" id="3.40.50.300:FF:003317">
    <property type="entry name" value="Phage GTP-binding protein"/>
    <property type="match status" value="1"/>
</dbReference>
<dbReference type="Gene3D" id="3.40.50.300">
    <property type="entry name" value="P-loop containing nucleotide triphosphate hydrolases"/>
    <property type="match status" value="1"/>
</dbReference>
<dbReference type="InterPro" id="IPR006073">
    <property type="entry name" value="GTP-bd"/>
</dbReference>
<dbReference type="InterPro" id="IPR027417">
    <property type="entry name" value="P-loop_NTPase"/>
</dbReference>
<dbReference type="PANTHER" id="PTHR42714">
    <property type="entry name" value="TRNA MODIFICATION GTPASE GTPBP3"/>
    <property type="match status" value="1"/>
</dbReference>
<dbReference type="PANTHER" id="PTHR42714:SF2">
    <property type="entry name" value="TRNA MODIFICATION GTPASE GTPBP3, MITOCHONDRIAL"/>
    <property type="match status" value="1"/>
</dbReference>
<dbReference type="Pfam" id="PF01926">
    <property type="entry name" value="MMR_HSR1"/>
    <property type="match status" value="1"/>
</dbReference>
<dbReference type="SUPFAM" id="SSF52540">
    <property type="entry name" value="P-loop containing nucleoside triphosphate hydrolases"/>
    <property type="match status" value="1"/>
</dbReference>
<reference key="1">
    <citation type="journal article" date="1997" name="Science">
        <title>The complete genome sequence of Escherichia coli K-12.</title>
        <authorList>
            <person name="Blattner F.R."/>
            <person name="Plunkett G. III"/>
            <person name="Bloch C.A."/>
            <person name="Perna N.T."/>
            <person name="Burland V."/>
            <person name="Riley M."/>
            <person name="Collado-Vides J."/>
            <person name="Glasner J.D."/>
            <person name="Rode C.K."/>
            <person name="Mayhew G.F."/>
            <person name="Gregor J."/>
            <person name="Davis N.W."/>
            <person name="Kirkpatrick H.A."/>
            <person name="Goeden M.A."/>
            <person name="Rose D.J."/>
            <person name="Mau B."/>
            <person name="Shao Y."/>
        </authorList>
    </citation>
    <scope>NUCLEOTIDE SEQUENCE [LARGE SCALE GENOMIC DNA]</scope>
    <source>
        <strain>K12 / MG1655 / ATCC 47076</strain>
    </source>
</reference>
<reference key="2">
    <citation type="journal article" date="2006" name="Nucleic Acids Res.">
        <title>Escherichia coli K-12: a cooperatively developed annotation snapshot -- 2005.</title>
        <authorList>
            <person name="Riley M."/>
            <person name="Abe T."/>
            <person name="Arnaud M.B."/>
            <person name="Berlyn M.K.B."/>
            <person name="Blattner F.R."/>
            <person name="Chaudhuri R.R."/>
            <person name="Glasner J.D."/>
            <person name="Horiuchi T."/>
            <person name="Keseler I.M."/>
            <person name="Kosuge T."/>
            <person name="Mori H."/>
            <person name="Perna N.T."/>
            <person name="Plunkett G. III"/>
            <person name="Rudd K.E."/>
            <person name="Serres M.H."/>
            <person name="Thomas G.H."/>
            <person name="Thomson N.R."/>
            <person name="Wishart D."/>
            <person name="Wanner B.L."/>
        </authorList>
    </citation>
    <scope>SEQUENCE REVISION TO 218; 233 AND 248</scope>
</reference>
<reference key="3">
    <citation type="journal article" date="2006" name="Mol. Syst. Biol.">
        <title>Highly accurate genome sequences of Escherichia coli K-12 strains MG1655 and W3110.</title>
        <authorList>
            <person name="Hayashi K."/>
            <person name="Morooka N."/>
            <person name="Yamamoto Y."/>
            <person name="Fujita K."/>
            <person name="Isono K."/>
            <person name="Choi S."/>
            <person name="Ohtsubo E."/>
            <person name="Baba T."/>
            <person name="Wanner B.L."/>
            <person name="Mori H."/>
            <person name="Horiuchi T."/>
        </authorList>
    </citation>
    <scope>NUCLEOTIDE SEQUENCE [LARGE SCALE GENOMIC DNA]</scope>
    <source>
        <strain>K12 / W3110 / ATCC 27325 / DSM 5911</strain>
    </source>
</reference>
<evidence type="ECO:0000255" key="1"/>
<evidence type="ECO:0000305" key="2"/>
<gene>
    <name type="primary">yfjP</name>
    <name type="ordered locus">b2632</name>
    <name type="ordered locus">JW5419</name>
</gene>
<name>YFJP_ECOLI</name>
<protein>
    <recommendedName>
        <fullName>Uncharacterized protein YfjP</fullName>
    </recommendedName>
</protein>
<accession>P52131</accession>
<accession>P76605</accession>
<accession>Q2MAD9</accession>
<accession>Q6BF68</accession>
<keyword id="KW-0342">GTP-binding</keyword>
<keyword id="KW-0547">Nucleotide-binding</keyword>
<keyword id="KW-1185">Reference proteome</keyword>
<feature type="chain" id="PRO_0000169281" description="Uncharacterized protein YfjP">
    <location>
        <begin position="1"/>
        <end position="287"/>
    </location>
</feature>
<feature type="domain" description="G">
    <location>
        <begin position="48"/>
        <end position="140"/>
    </location>
</feature>
<feature type="binding site" evidence="1">
    <location>
        <begin position="43"/>
        <end position="50"/>
    </location>
    <ligand>
        <name>GTP</name>
        <dbReference type="ChEBI" id="CHEBI:37565"/>
    </ligand>
</feature>
<feature type="binding site" evidence="1">
    <location>
        <begin position="90"/>
        <end position="93"/>
    </location>
    <ligand>
        <name>GTP</name>
        <dbReference type="ChEBI" id="CHEBI:37565"/>
    </ligand>
</feature>
<feature type="binding site" evidence="1">
    <location>
        <begin position="156"/>
        <end position="159"/>
    </location>
    <ligand>
        <name>GTP</name>
        <dbReference type="ChEBI" id="CHEBI:37565"/>
    </ligand>
</feature>
<feature type="sequence conflict" description="In Ref. 1; AAA79801." evidence="2" ref="1">
    <original>A</original>
    <variation>P</variation>
    <location>
        <position position="218"/>
    </location>
</feature>
<feature type="sequence conflict" description="In Ref. 1; AAA79801." evidence="2" ref="1">
    <original>T</original>
    <variation>W</variation>
    <location>
        <position position="233"/>
    </location>
</feature>
<feature type="sequence conflict" description="In Ref. 1; AAA79801." evidence="2" ref="1">
    <original>GA</original>
    <variation>DT</variation>
    <location>
        <begin position="248"/>
        <end position="249"/>
    </location>
</feature>
<sequence>MKNFEVLQPLQNSLSGLPLWVSERILQQINQLTHYEPVIGIMGKTGAGKSSLCNALFAGEVSPVSDVAACTRDPLRFRLQIGEHFMTIVDLPGVGESGVRDTEYAALYREQLPRLDLILWLIKADDRALATDEHFYRQVIGEAYRHKMLFVISQSDKAEPTSGGNILSTEQKQNISRKICLLHELFQPVHPVCAVSVRLQWGLRVMAERMIKCLPREASSPVVALLQHPFRTTVAREQARDDFGETVGAILDTVSTFPLIPAPVRTIIQAVRSSVVSVARAVWDFFF</sequence>
<proteinExistence type="predicted"/>
<organism>
    <name type="scientific">Escherichia coli (strain K12)</name>
    <dbReference type="NCBI Taxonomy" id="83333"/>
    <lineage>
        <taxon>Bacteria</taxon>
        <taxon>Pseudomonadati</taxon>
        <taxon>Pseudomonadota</taxon>
        <taxon>Gammaproteobacteria</taxon>
        <taxon>Enterobacterales</taxon>
        <taxon>Enterobacteriaceae</taxon>
        <taxon>Escherichia</taxon>
    </lineage>
</organism>
<comment type="similarity">
    <text evidence="2">To E.coli YkfA and YeeP.</text>
</comment>
<comment type="sequence caution" evidence="2">
    <conflict type="erroneous initiation">
        <sequence resource="EMBL-CDS" id="AAA79801"/>
    </conflict>
</comment>